<accession>A7IJ80</accession>
<reference key="1">
    <citation type="submission" date="2007-07" db="EMBL/GenBank/DDBJ databases">
        <title>Complete sequence of chromosome of Xanthobacter autotrophicus Py2.</title>
        <authorList>
            <consortium name="US DOE Joint Genome Institute"/>
            <person name="Copeland A."/>
            <person name="Lucas S."/>
            <person name="Lapidus A."/>
            <person name="Barry K."/>
            <person name="Glavina del Rio T."/>
            <person name="Hammon N."/>
            <person name="Israni S."/>
            <person name="Dalin E."/>
            <person name="Tice H."/>
            <person name="Pitluck S."/>
            <person name="Sims D."/>
            <person name="Brettin T."/>
            <person name="Bruce D."/>
            <person name="Detter J.C."/>
            <person name="Han C."/>
            <person name="Tapia R."/>
            <person name="Brainard J."/>
            <person name="Schmutz J."/>
            <person name="Larimer F."/>
            <person name="Land M."/>
            <person name="Hauser L."/>
            <person name="Kyrpides N."/>
            <person name="Kim E."/>
            <person name="Ensigns S.A."/>
            <person name="Richardson P."/>
        </authorList>
    </citation>
    <scope>NUCLEOTIDE SEQUENCE [LARGE SCALE GENOMIC DNA]</scope>
    <source>
        <strain>ATCC BAA-1158 / Py2</strain>
    </source>
</reference>
<comment type="function">
    <text evidence="1">Specifically dimethylates two adjacent adenosines (A1518 and A1519) in the loop of a conserved hairpin near the 3'-end of 16S rRNA in the 30S particle. May play a critical role in biogenesis of 30S subunits.</text>
</comment>
<comment type="catalytic activity">
    <reaction evidence="1">
        <text>adenosine(1518)/adenosine(1519) in 16S rRNA + 4 S-adenosyl-L-methionine = N(6)-dimethyladenosine(1518)/N(6)-dimethyladenosine(1519) in 16S rRNA + 4 S-adenosyl-L-homocysteine + 4 H(+)</text>
        <dbReference type="Rhea" id="RHEA:19609"/>
        <dbReference type="Rhea" id="RHEA-COMP:10232"/>
        <dbReference type="Rhea" id="RHEA-COMP:10233"/>
        <dbReference type="ChEBI" id="CHEBI:15378"/>
        <dbReference type="ChEBI" id="CHEBI:57856"/>
        <dbReference type="ChEBI" id="CHEBI:59789"/>
        <dbReference type="ChEBI" id="CHEBI:74411"/>
        <dbReference type="ChEBI" id="CHEBI:74493"/>
        <dbReference type="EC" id="2.1.1.182"/>
    </reaction>
</comment>
<comment type="subcellular location">
    <subcellularLocation>
        <location evidence="1">Cytoplasm</location>
    </subcellularLocation>
</comment>
<comment type="similarity">
    <text evidence="1">Belongs to the class I-like SAM-binding methyltransferase superfamily. rRNA adenine N(6)-methyltransferase family. RsmA subfamily.</text>
</comment>
<protein>
    <recommendedName>
        <fullName evidence="1">Ribosomal RNA small subunit methyltransferase A</fullName>
        <ecNumber evidence="1">2.1.1.182</ecNumber>
    </recommendedName>
    <alternativeName>
        <fullName evidence="1">16S rRNA (adenine(1518)-N(6)/adenine(1519)-N(6))-dimethyltransferase</fullName>
    </alternativeName>
    <alternativeName>
        <fullName evidence="1">16S rRNA dimethyladenosine transferase</fullName>
    </alternativeName>
    <alternativeName>
        <fullName evidence="1">16S rRNA dimethylase</fullName>
    </alternativeName>
    <alternativeName>
        <fullName evidence="1">S-adenosylmethionine-6-N', N'-adenosyl(rRNA) dimethyltransferase</fullName>
    </alternativeName>
</protein>
<sequence>MSALDDLPPLRDVIRRHGLSAQKSLGQNFLLDLNLTGRIARASGPLEGATVVEVGPGPGGLTRALLALGARRVIAIERDQRCLDALAEVSDHYPGRLEVISGDALKVDVRPLVGDGEVRVVANLPYNIATLLLIGWLSTDPWPPWFSSLTLMFQKEVAERIVAAPGSKAYGRLAVLAGWRTTARIAFDVAPSAFVPPPKVTSSVVHLVPRSEPLPCALSALEKVTEAAFGQRRKMLRQSLKSLGVDTAALLKATGVEETARAEEIDVDGFVRLANTFAQLKSGAGAAA</sequence>
<dbReference type="EC" id="2.1.1.182" evidence="1"/>
<dbReference type="EMBL" id="CP000781">
    <property type="protein sequence ID" value="ABS68073.1"/>
    <property type="molecule type" value="Genomic_DNA"/>
</dbReference>
<dbReference type="SMR" id="A7IJ80"/>
<dbReference type="STRING" id="78245.Xaut_2833"/>
<dbReference type="KEGG" id="xau:Xaut_2833"/>
<dbReference type="eggNOG" id="COG0030">
    <property type="taxonomic scope" value="Bacteria"/>
</dbReference>
<dbReference type="HOGENOM" id="CLU_041220_0_1_5"/>
<dbReference type="OrthoDB" id="9814755at2"/>
<dbReference type="PhylomeDB" id="A7IJ80"/>
<dbReference type="Proteomes" id="UP000002417">
    <property type="component" value="Chromosome"/>
</dbReference>
<dbReference type="GO" id="GO:0005829">
    <property type="term" value="C:cytosol"/>
    <property type="evidence" value="ECO:0007669"/>
    <property type="project" value="TreeGrafter"/>
</dbReference>
<dbReference type="GO" id="GO:0052908">
    <property type="term" value="F:16S rRNA (adenine(1518)-N(6)/adenine(1519)-N(6))-dimethyltransferase activity"/>
    <property type="evidence" value="ECO:0007669"/>
    <property type="project" value="UniProtKB-EC"/>
</dbReference>
<dbReference type="GO" id="GO:0003723">
    <property type="term" value="F:RNA binding"/>
    <property type="evidence" value="ECO:0007669"/>
    <property type="project" value="UniProtKB-KW"/>
</dbReference>
<dbReference type="CDD" id="cd02440">
    <property type="entry name" value="AdoMet_MTases"/>
    <property type="match status" value="1"/>
</dbReference>
<dbReference type="FunFam" id="1.10.8.100:FF:000001">
    <property type="entry name" value="Ribosomal RNA small subunit methyltransferase A"/>
    <property type="match status" value="1"/>
</dbReference>
<dbReference type="FunFam" id="3.40.50.150:FF:000023">
    <property type="entry name" value="Ribosomal RNA small subunit methyltransferase A"/>
    <property type="match status" value="1"/>
</dbReference>
<dbReference type="Gene3D" id="1.10.8.100">
    <property type="entry name" value="Ribosomal RNA adenine dimethylase-like, domain 2"/>
    <property type="match status" value="1"/>
</dbReference>
<dbReference type="Gene3D" id="3.40.50.150">
    <property type="entry name" value="Vaccinia Virus protein VP39"/>
    <property type="match status" value="1"/>
</dbReference>
<dbReference type="HAMAP" id="MF_00607">
    <property type="entry name" value="16SrRNA_methyltr_A"/>
    <property type="match status" value="1"/>
</dbReference>
<dbReference type="InterPro" id="IPR001737">
    <property type="entry name" value="KsgA/Erm"/>
</dbReference>
<dbReference type="InterPro" id="IPR023165">
    <property type="entry name" value="rRNA_Ade_diMease-like_C"/>
</dbReference>
<dbReference type="InterPro" id="IPR020596">
    <property type="entry name" value="rRNA_Ade_Mease_Trfase_CS"/>
</dbReference>
<dbReference type="InterPro" id="IPR020598">
    <property type="entry name" value="rRNA_Ade_methylase_Trfase_N"/>
</dbReference>
<dbReference type="InterPro" id="IPR011530">
    <property type="entry name" value="rRNA_adenine_dimethylase"/>
</dbReference>
<dbReference type="InterPro" id="IPR029063">
    <property type="entry name" value="SAM-dependent_MTases_sf"/>
</dbReference>
<dbReference type="NCBIfam" id="TIGR00755">
    <property type="entry name" value="ksgA"/>
    <property type="match status" value="1"/>
</dbReference>
<dbReference type="PANTHER" id="PTHR11727">
    <property type="entry name" value="DIMETHYLADENOSINE TRANSFERASE"/>
    <property type="match status" value="1"/>
</dbReference>
<dbReference type="PANTHER" id="PTHR11727:SF7">
    <property type="entry name" value="DIMETHYLADENOSINE TRANSFERASE-RELATED"/>
    <property type="match status" value="1"/>
</dbReference>
<dbReference type="Pfam" id="PF00398">
    <property type="entry name" value="RrnaAD"/>
    <property type="match status" value="1"/>
</dbReference>
<dbReference type="SMART" id="SM00650">
    <property type="entry name" value="rADc"/>
    <property type="match status" value="1"/>
</dbReference>
<dbReference type="SUPFAM" id="SSF53335">
    <property type="entry name" value="S-adenosyl-L-methionine-dependent methyltransferases"/>
    <property type="match status" value="1"/>
</dbReference>
<dbReference type="PROSITE" id="PS01131">
    <property type="entry name" value="RRNA_A_DIMETH"/>
    <property type="match status" value="1"/>
</dbReference>
<dbReference type="PROSITE" id="PS51689">
    <property type="entry name" value="SAM_RNA_A_N6_MT"/>
    <property type="match status" value="1"/>
</dbReference>
<feature type="chain" id="PRO_1000130339" description="Ribosomal RNA small subunit methyltransferase A">
    <location>
        <begin position="1"/>
        <end position="288"/>
    </location>
</feature>
<feature type="binding site" evidence="1">
    <location>
        <position position="28"/>
    </location>
    <ligand>
        <name>S-adenosyl-L-methionine</name>
        <dbReference type="ChEBI" id="CHEBI:59789"/>
    </ligand>
</feature>
<feature type="binding site" evidence="1">
    <location>
        <position position="30"/>
    </location>
    <ligand>
        <name>S-adenosyl-L-methionine</name>
        <dbReference type="ChEBI" id="CHEBI:59789"/>
    </ligand>
</feature>
<feature type="binding site" evidence="1">
    <location>
        <position position="55"/>
    </location>
    <ligand>
        <name>S-adenosyl-L-methionine</name>
        <dbReference type="ChEBI" id="CHEBI:59789"/>
    </ligand>
</feature>
<feature type="binding site" evidence="1">
    <location>
        <position position="77"/>
    </location>
    <ligand>
        <name>S-adenosyl-L-methionine</name>
        <dbReference type="ChEBI" id="CHEBI:59789"/>
    </ligand>
</feature>
<feature type="binding site" evidence="1">
    <location>
        <position position="103"/>
    </location>
    <ligand>
        <name>S-adenosyl-L-methionine</name>
        <dbReference type="ChEBI" id="CHEBI:59789"/>
    </ligand>
</feature>
<feature type="binding site" evidence="1">
    <location>
        <position position="123"/>
    </location>
    <ligand>
        <name>S-adenosyl-L-methionine</name>
        <dbReference type="ChEBI" id="CHEBI:59789"/>
    </ligand>
</feature>
<organism>
    <name type="scientific">Xanthobacter autotrophicus (strain ATCC BAA-1158 / Py2)</name>
    <dbReference type="NCBI Taxonomy" id="78245"/>
    <lineage>
        <taxon>Bacteria</taxon>
        <taxon>Pseudomonadati</taxon>
        <taxon>Pseudomonadota</taxon>
        <taxon>Alphaproteobacteria</taxon>
        <taxon>Hyphomicrobiales</taxon>
        <taxon>Xanthobacteraceae</taxon>
        <taxon>Xanthobacter</taxon>
    </lineage>
</organism>
<gene>
    <name evidence="1" type="primary">rsmA</name>
    <name evidence="1" type="synonym">ksgA</name>
    <name type="ordered locus">Xaut_2833</name>
</gene>
<keyword id="KW-0963">Cytoplasm</keyword>
<keyword id="KW-0489">Methyltransferase</keyword>
<keyword id="KW-1185">Reference proteome</keyword>
<keyword id="KW-0694">RNA-binding</keyword>
<keyword id="KW-0698">rRNA processing</keyword>
<keyword id="KW-0949">S-adenosyl-L-methionine</keyword>
<keyword id="KW-0808">Transferase</keyword>
<evidence type="ECO:0000255" key="1">
    <source>
        <dbReference type="HAMAP-Rule" id="MF_00607"/>
    </source>
</evidence>
<proteinExistence type="inferred from homology"/>
<name>RSMA_XANP2</name>